<gene>
    <name type="primary">AGD4</name>
    <name type="synonym">GCP1</name>
    <name type="ordered locus">At1g10870</name>
    <name type="ORF">T19D16.20</name>
</gene>
<protein>
    <recommendedName>
        <fullName>ADP-ribosylation factor GTPase-activating protein AGD4</fullName>
        <shortName>ARF GAP AGD4</shortName>
    </recommendedName>
    <alternativeName>
        <fullName>GCN4-complementing protein 1</fullName>
    </alternativeName>
    <alternativeName>
        <fullName>Protein ARF-GAP DOMAIN 4</fullName>
        <shortName>AtAGD4</shortName>
    </alternativeName>
</protein>
<comment type="function">
    <text evidence="1">Probable GTPase-activating protein.</text>
</comment>
<comment type="tissue specificity">
    <text evidence="4">Expressed in roots, hypocotyls, cotyledons, leaf and shoot apical meristems and siliques.</text>
</comment>
<comment type="sequence caution" evidence="5">
    <conflict type="erroneous gene model prediction">
        <sequence resource="EMBL-CDS" id="AAB65489"/>
    </conflict>
</comment>
<keyword id="KW-0040">ANK repeat</keyword>
<keyword id="KW-0175">Coiled coil</keyword>
<keyword id="KW-0343">GTPase activation</keyword>
<keyword id="KW-0479">Metal-binding</keyword>
<keyword id="KW-1185">Reference proteome</keyword>
<keyword id="KW-0677">Repeat</keyword>
<keyword id="KW-0862">Zinc</keyword>
<keyword id="KW-0863">Zinc-finger</keyword>
<feature type="chain" id="PRO_5000064627" description="ADP-ribosylation factor GTPase-activating protein AGD4">
    <location>
        <begin position="1"/>
        <end position="775"/>
    </location>
</feature>
<feature type="domain" description="BAR">
    <location>
        <begin position="2"/>
        <end position="226"/>
    </location>
</feature>
<feature type="domain" description="PH" evidence="2">
    <location>
        <begin position="288"/>
        <end position="421"/>
    </location>
</feature>
<feature type="domain" description="Arf-GAP" evidence="3">
    <location>
        <begin position="467"/>
        <end position="603"/>
    </location>
</feature>
<feature type="repeat" description="ANK 1">
    <location>
        <begin position="682"/>
        <end position="711"/>
    </location>
</feature>
<feature type="repeat" description="ANK 2">
    <location>
        <begin position="715"/>
        <end position="744"/>
    </location>
</feature>
<feature type="zinc finger region" description="C4-type" evidence="3">
    <location>
        <begin position="482"/>
        <end position="505"/>
    </location>
</feature>
<accession>Q9SMX5</accession>
<accession>O04097</accession>
<evidence type="ECO:0000250" key="1"/>
<evidence type="ECO:0000255" key="2">
    <source>
        <dbReference type="PROSITE-ProRule" id="PRU00145"/>
    </source>
</evidence>
<evidence type="ECO:0000255" key="3">
    <source>
        <dbReference type="PROSITE-ProRule" id="PRU00288"/>
    </source>
</evidence>
<evidence type="ECO:0000269" key="4">
    <source>
    </source>
</evidence>
<evidence type="ECO:0000305" key="5"/>
<name>AGD4_ARATH</name>
<sequence>MATFINLEDSPMFQKQVCSLEGTADELKDRCQKLYKGVKKFMGTLGEASKGESAFAACLEEFGGGPDDPISLSIGGPVISKFINALRELASYKEFLCSQVEHVLLERLMNFISVDLQEAKESRHRFDKAAHSYDQSREKFVSLKKNTRGEIVAELEEDLENSKSTFEKSRFNLVNSLMTIEAKKKYEFLESISAIMDAHLRYFKLGYDLLNQLEPFIHQILTYAQQSKEQSKIEQDRLARRIQEFRTQSELDSQQLVANAESSGANGNRVGGNIPYKNTETSLTADKEVIKQGYLLKRSSSLRTDWKRKFFVLDSHGSMYYYRTNGNKSMGSHHHYSGSSDHNTGVFGRFRARHNRSGSLTEGSLGYNTIDLRTSLIKLDAEDMDLRLCFRIISPQKTYTLQAENGADRMDWVNKITKAIGTLLNSHFLQQSPVRYLDKDNSSSAPANAVVSGDQIRHNDSRQNIGDDVSTILRGLPGNNACAECNAPEPDWASLNLGVLLCIQCSGVHRNLGVHISKVRSLSLDVKVWEPTILDLFRNLGNVYCNSLWEGLLHLDDDCEDGSALSHASVSKPCPEDSFSVKEKYILGKYLEKALVIKDESEANLSAASRIWEAVQSRNIREIYRLIVTTGDVNIINTKFDDITDIDAYHHIDAAEKAVKKRHDPTVCQRIKESNEPRSCLQGCSLLHVACHIGDSVLLELLLQFGADLNIRDYHGRTPLHHCISSGNHKFAKILLRRGARPSIEDDGGLSVLERAMEMGAITDEELFLLLAECA</sequence>
<organism>
    <name type="scientific">Arabidopsis thaliana</name>
    <name type="common">Mouse-ear cress</name>
    <dbReference type="NCBI Taxonomy" id="3702"/>
    <lineage>
        <taxon>Eukaryota</taxon>
        <taxon>Viridiplantae</taxon>
        <taxon>Streptophyta</taxon>
        <taxon>Embryophyta</taxon>
        <taxon>Tracheophyta</taxon>
        <taxon>Spermatophyta</taxon>
        <taxon>Magnoliopsida</taxon>
        <taxon>eudicotyledons</taxon>
        <taxon>Gunneridae</taxon>
        <taxon>Pentapetalae</taxon>
        <taxon>rosids</taxon>
        <taxon>malvids</taxon>
        <taxon>Brassicales</taxon>
        <taxon>Brassicaceae</taxon>
        <taxon>Camelineae</taxon>
        <taxon>Arabidopsis</taxon>
    </lineage>
</organism>
<proteinExistence type="evidence at transcript level"/>
<dbReference type="EMBL" id="AJ130878">
    <property type="protein sequence ID" value="CAB61505.1"/>
    <property type="molecule type" value="mRNA"/>
</dbReference>
<dbReference type="EMBL" id="U95973">
    <property type="protein sequence ID" value="AAB65489.1"/>
    <property type="status" value="ALT_SEQ"/>
    <property type="molecule type" value="Genomic_DNA"/>
</dbReference>
<dbReference type="EMBL" id="CP002684">
    <property type="protein sequence ID" value="AEE28658.1"/>
    <property type="molecule type" value="Genomic_DNA"/>
</dbReference>
<dbReference type="PIR" id="D86242">
    <property type="entry name" value="D86242"/>
</dbReference>
<dbReference type="RefSeq" id="NP_172556.2">
    <property type="nucleotide sequence ID" value="NM_100962.4"/>
</dbReference>
<dbReference type="SMR" id="Q9SMX5"/>
<dbReference type="FunCoup" id="Q9SMX5">
    <property type="interactions" value="3342"/>
</dbReference>
<dbReference type="STRING" id="3702.Q9SMX5"/>
<dbReference type="iPTMnet" id="Q9SMX5"/>
<dbReference type="PaxDb" id="3702-AT1G10870.1"/>
<dbReference type="ProteomicsDB" id="244729"/>
<dbReference type="EnsemblPlants" id="AT1G10870.1">
    <property type="protein sequence ID" value="AT1G10870.1"/>
    <property type="gene ID" value="AT1G10870"/>
</dbReference>
<dbReference type="GeneID" id="837629"/>
<dbReference type="Gramene" id="AT1G10870.1">
    <property type="protein sequence ID" value="AT1G10870.1"/>
    <property type="gene ID" value="AT1G10870"/>
</dbReference>
<dbReference type="KEGG" id="ath:AT1G10870"/>
<dbReference type="Araport" id="AT1G10870"/>
<dbReference type="TAIR" id="AT1G10870">
    <property type="gene designation" value="AGD4"/>
</dbReference>
<dbReference type="eggNOG" id="KOG0521">
    <property type="taxonomic scope" value="Eukaryota"/>
</dbReference>
<dbReference type="HOGENOM" id="CLU_016029_1_0_1"/>
<dbReference type="InParanoid" id="Q9SMX5"/>
<dbReference type="PhylomeDB" id="Q9SMX5"/>
<dbReference type="PRO" id="PR:Q9SMX5"/>
<dbReference type="Proteomes" id="UP000006548">
    <property type="component" value="Chromosome 1"/>
</dbReference>
<dbReference type="ExpressionAtlas" id="Q9SMX5">
    <property type="expression patterns" value="baseline and differential"/>
</dbReference>
<dbReference type="GO" id="GO:0005737">
    <property type="term" value="C:cytoplasm"/>
    <property type="evidence" value="ECO:0007669"/>
    <property type="project" value="InterPro"/>
</dbReference>
<dbReference type="GO" id="GO:0005096">
    <property type="term" value="F:GTPase activator activity"/>
    <property type="evidence" value="ECO:0007669"/>
    <property type="project" value="UniProtKB-KW"/>
</dbReference>
<dbReference type="GO" id="GO:0008270">
    <property type="term" value="F:zinc ion binding"/>
    <property type="evidence" value="ECO:0007669"/>
    <property type="project" value="UniProtKB-KW"/>
</dbReference>
<dbReference type="CDD" id="cd08204">
    <property type="entry name" value="ArfGap"/>
    <property type="match status" value="1"/>
</dbReference>
<dbReference type="CDD" id="cd07606">
    <property type="entry name" value="BAR_SFC_plant"/>
    <property type="match status" value="1"/>
</dbReference>
<dbReference type="CDD" id="cd13250">
    <property type="entry name" value="PH_ACAP"/>
    <property type="match status" value="1"/>
</dbReference>
<dbReference type="Gene3D" id="1.25.40.20">
    <property type="entry name" value="Ankyrin repeat-containing domain"/>
    <property type="match status" value="1"/>
</dbReference>
<dbReference type="Gene3D" id="1.10.220.150">
    <property type="entry name" value="Arf GTPase activating protein"/>
    <property type="match status" value="1"/>
</dbReference>
<dbReference type="Gene3D" id="1.20.1270.60">
    <property type="entry name" value="Arfaptin homology (AH) domain/BAR domain"/>
    <property type="match status" value="1"/>
</dbReference>
<dbReference type="Gene3D" id="2.30.29.30">
    <property type="entry name" value="Pleckstrin-homology domain (PH domain)/Phosphotyrosine-binding domain (PTB)"/>
    <property type="match status" value="1"/>
</dbReference>
<dbReference type="InterPro" id="IPR045258">
    <property type="entry name" value="ACAP1/2/3-like"/>
</dbReference>
<dbReference type="InterPro" id="IPR035670">
    <property type="entry name" value="AGD1/2/3/4_BAR_plant"/>
</dbReference>
<dbReference type="InterPro" id="IPR027267">
    <property type="entry name" value="AH/BAR_dom_sf"/>
</dbReference>
<dbReference type="InterPro" id="IPR002110">
    <property type="entry name" value="Ankyrin_rpt"/>
</dbReference>
<dbReference type="InterPro" id="IPR036770">
    <property type="entry name" value="Ankyrin_rpt-contain_sf"/>
</dbReference>
<dbReference type="InterPro" id="IPR037278">
    <property type="entry name" value="ARFGAP/RecO"/>
</dbReference>
<dbReference type="InterPro" id="IPR001164">
    <property type="entry name" value="ArfGAP_dom"/>
</dbReference>
<dbReference type="InterPro" id="IPR038508">
    <property type="entry name" value="ArfGAP_dom_sf"/>
</dbReference>
<dbReference type="InterPro" id="IPR004148">
    <property type="entry name" value="BAR_dom"/>
</dbReference>
<dbReference type="InterPro" id="IPR011993">
    <property type="entry name" value="PH-like_dom_sf"/>
</dbReference>
<dbReference type="InterPro" id="IPR001849">
    <property type="entry name" value="PH_domain"/>
</dbReference>
<dbReference type="PANTHER" id="PTHR23180:SF404">
    <property type="entry name" value="ADP-RIBOSYLATION FACTOR GTPASE-ACTIVATING PROTEIN AGD4"/>
    <property type="match status" value="1"/>
</dbReference>
<dbReference type="PANTHER" id="PTHR23180">
    <property type="entry name" value="CENTAURIN/ARF"/>
    <property type="match status" value="1"/>
</dbReference>
<dbReference type="Pfam" id="PF12796">
    <property type="entry name" value="Ank_2"/>
    <property type="match status" value="1"/>
</dbReference>
<dbReference type="Pfam" id="PF01412">
    <property type="entry name" value="ArfGap"/>
    <property type="match status" value="1"/>
</dbReference>
<dbReference type="Pfam" id="PF16746">
    <property type="entry name" value="BAR_3"/>
    <property type="match status" value="1"/>
</dbReference>
<dbReference type="Pfam" id="PF00169">
    <property type="entry name" value="PH"/>
    <property type="match status" value="1"/>
</dbReference>
<dbReference type="PRINTS" id="PR00405">
    <property type="entry name" value="REVINTRACTNG"/>
</dbReference>
<dbReference type="SMART" id="SM00248">
    <property type="entry name" value="ANK"/>
    <property type="match status" value="2"/>
</dbReference>
<dbReference type="SMART" id="SM00105">
    <property type="entry name" value="ArfGap"/>
    <property type="match status" value="1"/>
</dbReference>
<dbReference type="SMART" id="SM00721">
    <property type="entry name" value="BAR"/>
    <property type="match status" value="1"/>
</dbReference>
<dbReference type="SMART" id="SM00233">
    <property type="entry name" value="PH"/>
    <property type="match status" value="1"/>
</dbReference>
<dbReference type="SUPFAM" id="SSF48403">
    <property type="entry name" value="Ankyrin repeat"/>
    <property type="match status" value="1"/>
</dbReference>
<dbReference type="SUPFAM" id="SSF57863">
    <property type="entry name" value="ArfGap/RecO-like zinc finger"/>
    <property type="match status" value="1"/>
</dbReference>
<dbReference type="SUPFAM" id="SSF103657">
    <property type="entry name" value="BAR/IMD domain-like"/>
    <property type="match status" value="1"/>
</dbReference>
<dbReference type="SUPFAM" id="SSF50729">
    <property type="entry name" value="PH domain-like"/>
    <property type="match status" value="1"/>
</dbReference>
<dbReference type="PROSITE" id="PS50297">
    <property type="entry name" value="ANK_REP_REGION"/>
    <property type="match status" value="1"/>
</dbReference>
<dbReference type="PROSITE" id="PS50088">
    <property type="entry name" value="ANK_REPEAT"/>
    <property type="match status" value="2"/>
</dbReference>
<dbReference type="PROSITE" id="PS50115">
    <property type="entry name" value="ARFGAP"/>
    <property type="match status" value="1"/>
</dbReference>
<dbReference type="PROSITE" id="PS50003">
    <property type="entry name" value="PH_DOMAIN"/>
    <property type="match status" value="1"/>
</dbReference>
<reference key="1">
    <citation type="submission" date="1998-11" db="EMBL/GenBank/DDBJ databases">
        <title>GCP1, a Zn-finger protein from Arabidopsis thaliana transactivate HIS expression in yeast.</title>
        <authorList>
            <person name="Zimmermann S."/>
            <person name="Wehrle C."/>
            <person name="Engelberg D."/>
            <person name="Frohnmeyer H."/>
        </authorList>
    </citation>
    <scope>NUCLEOTIDE SEQUENCE [MRNA]</scope>
    <source>
        <strain>cv. Landsberg erecta</strain>
    </source>
</reference>
<reference key="2">
    <citation type="journal article" date="2000" name="Nature">
        <title>Sequence and analysis of chromosome 1 of the plant Arabidopsis thaliana.</title>
        <authorList>
            <person name="Theologis A."/>
            <person name="Ecker J.R."/>
            <person name="Palm C.J."/>
            <person name="Federspiel N.A."/>
            <person name="Kaul S."/>
            <person name="White O."/>
            <person name="Alonso J."/>
            <person name="Altafi H."/>
            <person name="Araujo R."/>
            <person name="Bowman C.L."/>
            <person name="Brooks S.Y."/>
            <person name="Buehler E."/>
            <person name="Chan A."/>
            <person name="Chao Q."/>
            <person name="Chen H."/>
            <person name="Cheuk R.F."/>
            <person name="Chin C.W."/>
            <person name="Chung M.K."/>
            <person name="Conn L."/>
            <person name="Conway A.B."/>
            <person name="Conway A.R."/>
            <person name="Creasy T.H."/>
            <person name="Dewar K."/>
            <person name="Dunn P."/>
            <person name="Etgu P."/>
            <person name="Feldblyum T.V."/>
            <person name="Feng J.-D."/>
            <person name="Fong B."/>
            <person name="Fujii C.Y."/>
            <person name="Gill J.E."/>
            <person name="Goldsmith A.D."/>
            <person name="Haas B."/>
            <person name="Hansen N.F."/>
            <person name="Hughes B."/>
            <person name="Huizar L."/>
            <person name="Hunter J.L."/>
            <person name="Jenkins J."/>
            <person name="Johnson-Hopson C."/>
            <person name="Khan S."/>
            <person name="Khaykin E."/>
            <person name="Kim C.J."/>
            <person name="Koo H.L."/>
            <person name="Kremenetskaia I."/>
            <person name="Kurtz D.B."/>
            <person name="Kwan A."/>
            <person name="Lam B."/>
            <person name="Langin-Hooper S."/>
            <person name="Lee A."/>
            <person name="Lee J.M."/>
            <person name="Lenz C.A."/>
            <person name="Li J.H."/>
            <person name="Li Y.-P."/>
            <person name="Lin X."/>
            <person name="Liu S.X."/>
            <person name="Liu Z.A."/>
            <person name="Luros J.S."/>
            <person name="Maiti R."/>
            <person name="Marziali A."/>
            <person name="Militscher J."/>
            <person name="Miranda M."/>
            <person name="Nguyen M."/>
            <person name="Nierman W.C."/>
            <person name="Osborne B.I."/>
            <person name="Pai G."/>
            <person name="Peterson J."/>
            <person name="Pham P.K."/>
            <person name="Rizzo M."/>
            <person name="Rooney T."/>
            <person name="Rowley D."/>
            <person name="Sakano H."/>
            <person name="Salzberg S.L."/>
            <person name="Schwartz J.R."/>
            <person name="Shinn P."/>
            <person name="Southwick A.M."/>
            <person name="Sun H."/>
            <person name="Tallon L.J."/>
            <person name="Tambunga G."/>
            <person name="Toriumi M.J."/>
            <person name="Town C.D."/>
            <person name="Utterback T."/>
            <person name="Van Aken S."/>
            <person name="Vaysberg M."/>
            <person name="Vysotskaia V.S."/>
            <person name="Walker M."/>
            <person name="Wu D."/>
            <person name="Yu G."/>
            <person name="Fraser C.M."/>
            <person name="Venter J.C."/>
            <person name="Davis R.W."/>
        </authorList>
    </citation>
    <scope>NUCLEOTIDE SEQUENCE [LARGE SCALE GENOMIC DNA]</scope>
    <source>
        <strain>cv. Columbia</strain>
    </source>
</reference>
<reference key="3">
    <citation type="journal article" date="2017" name="Plant J.">
        <title>Araport11: a complete reannotation of the Arabidopsis thaliana reference genome.</title>
        <authorList>
            <person name="Cheng C.Y."/>
            <person name="Krishnakumar V."/>
            <person name="Chan A.P."/>
            <person name="Thibaud-Nissen F."/>
            <person name="Schobel S."/>
            <person name="Town C.D."/>
        </authorList>
    </citation>
    <scope>GENOME REANNOTATION</scope>
    <source>
        <strain>cv. Columbia</strain>
    </source>
</reference>
<reference key="4">
    <citation type="journal article" date="2003" name="Plant Physiol.">
        <title>Analysis of the small GTPase gene superfamily of Arabidopsis.</title>
        <authorList>
            <person name="Vernoud V."/>
            <person name="Horton A.C."/>
            <person name="Yang Z."/>
            <person name="Nielsen E."/>
        </authorList>
    </citation>
    <scope>GENE FAMILY</scope>
    <scope>NOMENCLATURE</scope>
</reference>
<reference key="5">
    <citation type="journal article" date="2006" name="Plant Cell">
        <title>SCARFACE encodes an ARF-GAP that is required for normal auxin efflux and vein patterning in Arabidopsis.</title>
        <authorList>
            <person name="Sieburth L.E."/>
            <person name="Muday G.K."/>
            <person name="King E.J."/>
            <person name="Benton G."/>
            <person name="Kim S."/>
            <person name="Metcalf K.E."/>
            <person name="Meyers L."/>
            <person name="Seamen E."/>
            <person name="Van Norman J.M."/>
        </authorList>
    </citation>
    <scope>TISSUE SPECIFICITY</scope>
</reference>